<proteinExistence type="evidence at transcript level"/>
<organism>
    <name type="scientific">Cavia porcellus</name>
    <name type="common">Guinea pig</name>
    <dbReference type="NCBI Taxonomy" id="10141"/>
    <lineage>
        <taxon>Eukaryota</taxon>
        <taxon>Metazoa</taxon>
        <taxon>Chordata</taxon>
        <taxon>Craniata</taxon>
        <taxon>Vertebrata</taxon>
        <taxon>Euteleostomi</taxon>
        <taxon>Mammalia</taxon>
        <taxon>Eutheria</taxon>
        <taxon>Euarchontoglires</taxon>
        <taxon>Glires</taxon>
        <taxon>Rodentia</taxon>
        <taxon>Hystricomorpha</taxon>
        <taxon>Caviidae</taxon>
        <taxon>Cavia</taxon>
    </lineage>
</organism>
<gene>
    <name type="primary">GNAI2</name>
</gene>
<reference key="1">
    <citation type="journal article" date="1992" name="Biochim. Biophys. Acta">
        <title>Three types of Gi alpha protein of the guinea-pig lung: cDNA cloning and analysis of their tissue distribution.</title>
        <authorList>
            <person name="Sakanaka C."/>
            <person name="Izumi T."/>
            <person name="Nakamura M."/>
            <person name="Honda Z."/>
            <person name="Watanabe T."/>
            <person name="Minami M."/>
            <person name="Mutoh H."/>
            <person name="Bito H."/>
            <person name="Seyama Y."/>
            <person name="Ui M."/>
            <person name="Shimizu T."/>
        </authorList>
    </citation>
    <scope>NUCLEOTIDE SEQUENCE [MRNA]</scope>
    <source>
        <strain>Hartley</strain>
        <tissue>Lung</tissue>
    </source>
</reference>
<evidence type="ECO:0000250" key="1"/>
<evidence type="ECO:0000250" key="2">
    <source>
        <dbReference type="UniProtKB" id="P04897"/>
    </source>
</evidence>
<evidence type="ECO:0000250" key="3">
    <source>
        <dbReference type="UniProtKB" id="P04899"/>
    </source>
</evidence>
<evidence type="ECO:0000255" key="4">
    <source>
        <dbReference type="PROSITE-ProRule" id="PRU01230"/>
    </source>
</evidence>
<evidence type="ECO:0000305" key="5"/>
<dbReference type="EMBL" id="D21233">
    <property type="protein sequence ID" value="BAA04765.1"/>
    <property type="molecule type" value="mRNA"/>
</dbReference>
<dbReference type="PIR" id="S28158">
    <property type="entry name" value="S28158"/>
</dbReference>
<dbReference type="RefSeq" id="NP_001166425.1">
    <property type="nucleotide sequence ID" value="NM_001172954.1"/>
</dbReference>
<dbReference type="RefSeq" id="XP_005006593.1">
    <property type="nucleotide sequence ID" value="XM_005006536.2"/>
</dbReference>
<dbReference type="SMR" id="P38402"/>
<dbReference type="FunCoup" id="P38402">
    <property type="interactions" value="3408"/>
</dbReference>
<dbReference type="STRING" id="10141.ENSCPOP00000025341"/>
<dbReference type="Ensembl" id="ENSCPOT00000013401.3">
    <property type="protein sequence ID" value="ENSCPOP00000011948.2"/>
    <property type="gene ID" value="ENSCPOG00000013273.4"/>
</dbReference>
<dbReference type="Ensembl" id="ENSCPOT00000043256.1">
    <property type="protein sequence ID" value="ENSCPOP00000025341.1"/>
    <property type="gene ID" value="ENSCPOG00000013273.4"/>
</dbReference>
<dbReference type="GeneID" id="100135529"/>
<dbReference type="KEGG" id="cpoc:100135529"/>
<dbReference type="CTD" id="2771"/>
<dbReference type="VEuPathDB" id="HostDB:ENSCPOG00000013273"/>
<dbReference type="eggNOG" id="KOG0082">
    <property type="taxonomic scope" value="Eukaryota"/>
</dbReference>
<dbReference type="GeneTree" id="ENSGT00940000155125"/>
<dbReference type="HOGENOM" id="CLU_014184_6_0_1"/>
<dbReference type="InParanoid" id="P38402"/>
<dbReference type="OMA" id="YMQLQFE"/>
<dbReference type="OrthoDB" id="5817230at2759"/>
<dbReference type="TreeFam" id="TF300673"/>
<dbReference type="Proteomes" id="UP000005447">
    <property type="component" value="Unassembled WGS sequence"/>
</dbReference>
<dbReference type="Bgee" id="ENSCPOG00000013273">
    <property type="expression patterns" value="Expressed in uterine cervix and 13 other cell types or tissues"/>
</dbReference>
<dbReference type="GO" id="GO:0044297">
    <property type="term" value="C:cell body"/>
    <property type="evidence" value="ECO:0007669"/>
    <property type="project" value="Ensembl"/>
</dbReference>
<dbReference type="GO" id="GO:0005813">
    <property type="term" value="C:centrosome"/>
    <property type="evidence" value="ECO:0000250"/>
    <property type="project" value="UniProtKB"/>
</dbReference>
<dbReference type="GO" id="GO:0036064">
    <property type="term" value="C:ciliary basal body"/>
    <property type="evidence" value="ECO:0007669"/>
    <property type="project" value="Ensembl"/>
</dbReference>
<dbReference type="GO" id="GO:0005737">
    <property type="term" value="C:cytoplasm"/>
    <property type="evidence" value="ECO:0000250"/>
    <property type="project" value="UniProtKB"/>
</dbReference>
<dbReference type="GO" id="GO:0005829">
    <property type="term" value="C:cytosol"/>
    <property type="evidence" value="ECO:0007669"/>
    <property type="project" value="Ensembl"/>
</dbReference>
<dbReference type="GO" id="GO:0030425">
    <property type="term" value="C:dendrite"/>
    <property type="evidence" value="ECO:0007669"/>
    <property type="project" value="Ensembl"/>
</dbReference>
<dbReference type="GO" id="GO:0005834">
    <property type="term" value="C:heterotrimeric G-protein complex"/>
    <property type="evidence" value="ECO:0007669"/>
    <property type="project" value="TreeGrafter"/>
</dbReference>
<dbReference type="GO" id="GO:0098686">
    <property type="term" value="C:hippocampal mossy fiber to CA3 synapse"/>
    <property type="evidence" value="ECO:0007669"/>
    <property type="project" value="Ensembl"/>
</dbReference>
<dbReference type="GO" id="GO:0030496">
    <property type="term" value="C:midbody"/>
    <property type="evidence" value="ECO:0000250"/>
    <property type="project" value="UniProtKB"/>
</dbReference>
<dbReference type="GO" id="GO:0098992">
    <property type="term" value="C:neuronal dense core vesicle"/>
    <property type="evidence" value="ECO:0007669"/>
    <property type="project" value="Ensembl"/>
</dbReference>
<dbReference type="GO" id="GO:0005654">
    <property type="term" value="C:nucleoplasm"/>
    <property type="evidence" value="ECO:0007669"/>
    <property type="project" value="Ensembl"/>
</dbReference>
<dbReference type="GO" id="GO:0005886">
    <property type="term" value="C:plasma membrane"/>
    <property type="evidence" value="ECO:0000250"/>
    <property type="project" value="UniProtKB"/>
</dbReference>
<dbReference type="GO" id="GO:0001664">
    <property type="term" value="F:G protein-coupled receptor binding"/>
    <property type="evidence" value="ECO:0007669"/>
    <property type="project" value="TreeGrafter"/>
</dbReference>
<dbReference type="GO" id="GO:0031683">
    <property type="term" value="F:G-protein beta/gamma-subunit complex binding"/>
    <property type="evidence" value="ECO:0007669"/>
    <property type="project" value="InterPro"/>
</dbReference>
<dbReference type="GO" id="GO:0005525">
    <property type="term" value="F:GTP binding"/>
    <property type="evidence" value="ECO:0007669"/>
    <property type="project" value="UniProtKB-KW"/>
</dbReference>
<dbReference type="GO" id="GO:0003924">
    <property type="term" value="F:GTPase activity"/>
    <property type="evidence" value="ECO:0007669"/>
    <property type="project" value="InterPro"/>
</dbReference>
<dbReference type="GO" id="GO:0046872">
    <property type="term" value="F:metal ion binding"/>
    <property type="evidence" value="ECO:0007669"/>
    <property type="project" value="UniProtKB-KW"/>
</dbReference>
<dbReference type="GO" id="GO:0007193">
    <property type="term" value="P:adenylate cyclase-inhibiting G protein-coupled receptor signaling pathway"/>
    <property type="evidence" value="ECO:0007669"/>
    <property type="project" value="Ensembl"/>
</dbReference>
<dbReference type="GO" id="GO:0051301">
    <property type="term" value="P:cell division"/>
    <property type="evidence" value="ECO:0000250"/>
    <property type="project" value="UniProtKB"/>
</dbReference>
<dbReference type="GO" id="GO:0008283">
    <property type="term" value="P:cell population proliferation"/>
    <property type="evidence" value="ECO:0007669"/>
    <property type="project" value="Ensembl"/>
</dbReference>
<dbReference type="GO" id="GO:0007213">
    <property type="term" value="P:G protein-coupled acetylcholine receptor signaling pathway"/>
    <property type="evidence" value="ECO:0007669"/>
    <property type="project" value="Ensembl"/>
</dbReference>
<dbReference type="GO" id="GO:0001973">
    <property type="term" value="P:G protein-coupled adenosine receptor signaling pathway"/>
    <property type="evidence" value="ECO:0007669"/>
    <property type="project" value="TreeGrafter"/>
</dbReference>
<dbReference type="GO" id="GO:0007214">
    <property type="term" value="P:gamma-aminobutyric acid signaling pathway"/>
    <property type="evidence" value="ECO:0007669"/>
    <property type="project" value="TreeGrafter"/>
</dbReference>
<dbReference type="GO" id="GO:0050804">
    <property type="term" value="P:modulation of chemical synaptic transmission"/>
    <property type="evidence" value="ECO:0007669"/>
    <property type="project" value="Ensembl"/>
</dbReference>
<dbReference type="GO" id="GO:0008284">
    <property type="term" value="P:positive regulation of cell population proliferation"/>
    <property type="evidence" value="ECO:0007669"/>
    <property type="project" value="Ensembl"/>
</dbReference>
<dbReference type="CDD" id="cd00066">
    <property type="entry name" value="G-alpha"/>
    <property type="match status" value="1"/>
</dbReference>
<dbReference type="FunFam" id="1.10.400.10:FF:000001">
    <property type="entry name" value="Guanine nucleotide-binding protein G(I) subunit alpha"/>
    <property type="match status" value="1"/>
</dbReference>
<dbReference type="FunFam" id="3.40.50.300:FF:002487">
    <property type="entry name" value="Guanine nucleotide-binding protein G(i) subunit alpha-1"/>
    <property type="match status" value="1"/>
</dbReference>
<dbReference type="FunFam" id="3.40.50.300:FF:003559">
    <property type="entry name" value="Guanine nucleotide-binding protein G(i) subunit alpha-1"/>
    <property type="match status" value="1"/>
</dbReference>
<dbReference type="Gene3D" id="1.10.400.10">
    <property type="entry name" value="GI Alpha 1, domain 2-like"/>
    <property type="match status" value="1"/>
</dbReference>
<dbReference type="Gene3D" id="3.40.50.300">
    <property type="entry name" value="P-loop containing nucleotide triphosphate hydrolases"/>
    <property type="match status" value="1"/>
</dbReference>
<dbReference type="InterPro" id="IPR001408">
    <property type="entry name" value="Gprotein_alpha_I"/>
</dbReference>
<dbReference type="InterPro" id="IPR001019">
    <property type="entry name" value="Gprotein_alpha_su"/>
</dbReference>
<dbReference type="InterPro" id="IPR011025">
    <property type="entry name" value="GproteinA_insert"/>
</dbReference>
<dbReference type="InterPro" id="IPR027417">
    <property type="entry name" value="P-loop_NTPase"/>
</dbReference>
<dbReference type="PANTHER" id="PTHR10218">
    <property type="entry name" value="GTP-BINDING PROTEIN ALPHA SUBUNIT"/>
    <property type="match status" value="1"/>
</dbReference>
<dbReference type="PANTHER" id="PTHR10218:SF73">
    <property type="entry name" value="GUANINE NUCLEOTIDE-BINDING PROTEIN G(I) SUBUNIT ALPHA-2"/>
    <property type="match status" value="1"/>
</dbReference>
<dbReference type="Pfam" id="PF00503">
    <property type="entry name" value="G-alpha"/>
    <property type="match status" value="1"/>
</dbReference>
<dbReference type="PRINTS" id="PR00318">
    <property type="entry name" value="GPROTEINA"/>
</dbReference>
<dbReference type="PRINTS" id="PR00441">
    <property type="entry name" value="GPROTEINAI"/>
</dbReference>
<dbReference type="SMART" id="SM00275">
    <property type="entry name" value="G_alpha"/>
    <property type="match status" value="1"/>
</dbReference>
<dbReference type="SUPFAM" id="SSF52540">
    <property type="entry name" value="P-loop containing nucleoside triphosphate hydrolases"/>
    <property type="match status" value="1"/>
</dbReference>
<dbReference type="SUPFAM" id="SSF47895">
    <property type="entry name" value="Transducin (alpha subunit), insertion domain"/>
    <property type="match status" value="1"/>
</dbReference>
<dbReference type="PROSITE" id="PS51882">
    <property type="entry name" value="G_ALPHA"/>
    <property type="match status" value="1"/>
</dbReference>
<accession>P38402</accession>
<feature type="initiator methionine" description="Removed" evidence="3">
    <location>
        <position position="1"/>
    </location>
</feature>
<feature type="chain" id="PRO_0000203678" description="Guanine nucleotide-binding protein G(i) subunit alpha-2">
    <location>
        <begin position="2"/>
        <end position="355"/>
    </location>
</feature>
<feature type="domain" description="G-alpha" evidence="4">
    <location>
        <begin position="32"/>
        <end position="355"/>
    </location>
</feature>
<feature type="region of interest" description="G1 motif" evidence="4">
    <location>
        <begin position="35"/>
        <end position="48"/>
    </location>
</feature>
<feature type="region of interest" description="G2 motif" evidence="4">
    <location>
        <begin position="174"/>
        <end position="182"/>
    </location>
</feature>
<feature type="region of interest" description="G3 motif" evidence="4">
    <location>
        <begin position="197"/>
        <end position="206"/>
    </location>
</feature>
<feature type="region of interest" description="G4 motif" evidence="4">
    <location>
        <begin position="266"/>
        <end position="273"/>
    </location>
</feature>
<feature type="region of interest" description="G5 motif" evidence="4">
    <location>
        <begin position="325"/>
        <end position="330"/>
    </location>
</feature>
<feature type="binding site" evidence="1">
    <location>
        <begin position="40"/>
        <end position="47"/>
    </location>
    <ligand>
        <name>GTP</name>
        <dbReference type="ChEBI" id="CHEBI:37565"/>
    </ligand>
</feature>
<feature type="binding site" evidence="1">
    <location>
        <position position="47"/>
    </location>
    <ligand>
        <name>Mg(2+)</name>
        <dbReference type="ChEBI" id="CHEBI:18420"/>
    </ligand>
</feature>
<feature type="binding site" evidence="1">
    <location>
        <begin position="176"/>
        <end position="182"/>
    </location>
    <ligand>
        <name>GTP</name>
        <dbReference type="ChEBI" id="CHEBI:37565"/>
    </ligand>
</feature>
<feature type="binding site" evidence="1">
    <location>
        <position position="182"/>
    </location>
    <ligand>
        <name>Mg(2+)</name>
        <dbReference type="ChEBI" id="CHEBI:18420"/>
    </ligand>
</feature>
<feature type="binding site" evidence="1">
    <location>
        <begin position="201"/>
        <end position="205"/>
    </location>
    <ligand>
        <name>GTP</name>
        <dbReference type="ChEBI" id="CHEBI:37565"/>
    </ligand>
</feature>
<feature type="binding site" evidence="1">
    <location>
        <begin position="270"/>
        <end position="273"/>
    </location>
    <ligand>
        <name>GTP</name>
        <dbReference type="ChEBI" id="CHEBI:37565"/>
    </ligand>
</feature>
<feature type="binding site" evidence="1">
    <location>
        <position position="327"/>
    </location>
    <ligand>
        <name>GTP</name>
        <dbReference type="ChEBI" id="CHEBI:37565"/>
    </ligand>
</feature>
<feature type="lipid moiety-binding region" description="N-myristoyl glycine" evidence="3">
    <location>
        <position position="2"/>
    </location>
</feature>
<feature type="lipid moiety-binding region" description="S-palmitoyl cysteine" evidence="1">
    <location>
        <position position="3"/>
    </location>
</feature>
<protein>
    <recommendedName>
        <fullName>Guanine nucleotide-binding protein G(i) subunit alpha-2</fullName>
    </recommendedName>
    <alternativeName>
        <fullName>Adenylate cyclase-inhibiting G alpha protein</fullName>
    </alternativeName>
</protein>
<comment type="function">
    <text evidence="1">Guanine nucleotide-binding proteins (G proteins) are involved as modulators or transducers in various transmembrane signaling systems. The G(i) proteins are involved in hormonal regulation of adenylate cyclase: they inhibit the cyclase in response to beta-adrenergic stimuli. May play a role in cell division (By similarity).</text>
</comment>
<comment type="subunit">
    <text evidence="2 3">G proteins are composed of 3 units; alpha, beta and gamma. The alpha chain contains the guanine nucleotide binding site. In this context, interacts with GNB2 (By similarity). Interacts with UNC5B (By similarity). Interacts with GPSM1 (By similarity). Interacts with RGS12 and RGS14 (By similarity). Interacts (inactive GDP-bound form) with NUCB1 (via GBA motif); the interaction leads to activation of GNAI3 (By similarity). Interacts (inactive GDP-bound form) with CCDC88C/DAPLE (via GBA motif) (By similarity). Interacts (inactive GDP-bound form) with CCDC8A/GIV (via GBA motif) (By similarity).</text>
</comment>
<comment type="subcellular location">
    <subcellularLocation>
        <location evidence="1">Cytoplasm</location>
    </subcellularLocation>
    <subcellularLocation>
        <location evidence="1">Cytoplasm</location>
        <location evidence="1">Cytoskeleton</location>
        <location evidence="1">Microtubule organizing center</location>
        <location evidence="1">Centrosome</location>
    </subcellularLocation>
    <subcellularLocation>
        <location evidence="1">Cell membrane</location>
    </subcellularLocation>
    <subcellularLocation>
        <location evidence="3">Membrane</location>
        <topology evidence="3">Lipid-anchor</topology>
    </subcellularLocation>
    <text evidence="1">Localizes in the centrosomes of interphase and mitotic cells. Detected at the cleavage furrow and/or the midbody (By similarity).</text>
</comment>
<comment type="tissue specificity">
    <text>Ubiquitously expressed. Most abundant in the lung and in the spleen.</text>
</comment>
<comment type="similarity">
    <text evidence="5">Belongs to the G-alpha family. G(i/o/t/z) subfamily.</text>
</comment>
<sequence>MGCTVSAEDKAAAERSKMIDKNLREDGEKAAREVKLLLLGAGESGKSTIVKQMKIIHEDGYSEEECRQYRAVVYSNTIQSIMAIVKAMGNLQIDFADPLRADDARQLFALSCTAEEQGMLPEDLSGVIRRLWADHGVQACFSRSREYQLNDSAAYYLNDLDRIAQSDYIPTQQDVLRTRVKTTGIVETHFTFKDLHFKMFDVGGQRSERKKWIHCFEGVTAIIFCVALSAYDLVLAEDEEMNRMHESMKLFDSICNNKWFTDTSIILFLNKKDLFEEKITHSPLTICFPEYTGANKYDEAASYIQSKFEDLNKRKDTKEIYTHFTCATDTKNVQFVFDAVTDVIIKNNLKDCGLF</sequence>
<keyword id="KW-0131">Cell cycle</keyword>
<keyword id="KW-0132">Cell division</keyword>
<keyword id="KW-1003">Cell membrane</keyword>
<keyword id="KW-0963">Cytoplasm</keyword>
<keyword id="KW-0206">Cytoskeleton</keyword>
<keyword id="KW-0342">GTP-binding</keyword>
<keyword id="KW-0449">Lipoprotein</keyword>
<keyword id="KW-0460">Magnesium</keyword>
<keyword id="KW-0472">Membrane</keyword>
<keyword id="KW-0479">Metal-binding</keyword>
<keyword id="KW-0519">Myristate</keyword>
<keyword id="KW-0547">Nucleotide-binding</keyword>
<keyword id="KW-0564">Palmitate</keyword>
<keyword id="KW-1185">Reference proteome</keyword>
<keyword id="KW-0807">Transducer</keyword>
<name>GNAI2_CAVPO</name>